<name>FCTA_SHIBS</name>
<gene>
    <name evidence="2" type="primary">frc</name>
    <name type="ordered locus">SBO_2400</name>
</gene>
<organism>
    <name type="scientific">Shigella boydii serotype 4 (strain Sb227)</name>
    <dbReference type="NCBI Taxonomy" id="300268"/>
    <lineage>
        <taxon>Bacteria</taxon>
        <taxon>Pseudomonadati</taxon>
        <taxon>Pseudomonadota</taxon>
        <taxon>Gammaproteobacteria</taxon>
        <taxon>Enterobacterales</taxon>
        <taxon>Enterobacteriaceae</taxon>
        <taxon>Shigella</taxon>
    </lineage>
</organism>
<sequence>MSTPLQGIKVLDFTGVQSGPSCTQMLAWFGADVIKIERPGVGDVTRHQLRDIPDIDALYFTMLNSNKRSIELNTKTAEGKEVMEKLIREADILVENFHPGAIDHMGFTWEHIQEINPRLIFGSIKGFDECSPYVNVKAYENVAQAAGGAASTTGFWDGPPLVSAAALGDSNTGMHLLIGLLAALLHREKTGRGQRVTMSMQDAVLNLCRVKLRDQQRLDKLGYLEEYPQYPNGTFGDAVPRGGNAGGGGQPGWILKCKGWETDPNAYIYFTIQEQNWENTCKAIGKPEWITDPAYSTAHARQPHIFDIFAEIEKYTVTIDKHEAVAYLTQFDIPCAPVLSMKEISLDPSLRQSGSVVEVEQPLRGKYLTVGCPMKFSAFTPDIKAAPLLGEHTAAVLQELGYSDDEIAAMKQNHAI</sequence>
<feature type="chain" id="PRO_0000300994" description="Formyl-CoA:oxalate CoA-transferase">
    <location>
        <begin position="1"/>
        <end position="416"/>
    </location>
</feature>
<feature type="active site" description="Nucleophile" evidence="2">
    <location>
        <position position="169"/>
    </location>
</feature>
<feature type="binding site" evidence="1">
    <location>
        <begin position="17"/>
        <end position="18"/>
    </location>
    <ligand>
        <name>CoA</name>
        <dbReference type="ChEBI" id="CHEBI:57287"/>
    </ligand>
</feature>
<feature type="binding site" evidence="2">
    <location>
        <position position="38"/>
    </location>
    <ligand>
        <name>CoA</name>
        <dbReference type="ChEBI" id="CHEBI:57287"/>
    </ligand>
</feature>
<feature type="binding site" evidence="1">
    <location>
        <begin position="72"/>
        <end position="75"/>
    </location>
    <ligand>
        <name>CoA</name>
        <dbReference type="ChEBI" id="CHEBI:57287"/>
    </ligand>
</feature>
<feature type="binding site" evidence="1">
    <location>
        <begin position="96"/>
        <end position="98"/>
    </location>
    <ligand>
        <name>CoA</name>
        <dbReference type="ChEBI" id="CHEBI:57287"/>
    </ligand>
</feature>
<feature type="binding site" evidence="2">
    <location>
        <position position="104"/>
    </location>
    <ligand>
        <name>CoA</name>
        <dbReference type="ChEBI" id="CHEBI:57287"/>
    </ligand>
</feature>
<feature type="binding site" evidence="1">
    <location>
        <begin position="137"/>
        <end position="140"/>
    </location>
    <ligand>
        <name>CoA</name>
        <dbReference type="ChEBI" id="CHEBI:57287"/>
    </ligand>
</feature>
<feature type="binding site" evidence="1">
    <location>
        <begin position="248"/>
        <end position="250"/>
    </location>
    <ligand>
        <name>substrate</name>
    </ligand>
</feature>
<feature type="binding site" evidence="1">
    <location>
        <begin position="273"/>
        <end position="275"/>
    </location>
    <ligand>
        <name>CoA</name>
        <dbReference type="ChEBI" id="CHEBI:57287"/>
    </ligand>
</feature>
<comment type="function">
    <text evidence="1">Involved in the catabolism of oxalate and in the adapatation to low pH via the induction of the oxalate-dependent acid tolerance response (ATR). Catalyzes the transfer of the CoA moiety from formyl-CoA to oxalate (By similarity).</text>
</comment>
<comment type="catalytic activity">
    <reaction evidence="2">
        <text>formyl-CoA + oxalate = oxalyl-CoA + formate</text>
        <dbReference type="Rhea" id="RHEA:16545"/>
        <dbReference type="ChEBI" id="CHEBI:15740"/>
        <dbReference type="ChEBI" id="CHEBI:30623"/>
        <dbReference type="ChEBI" id="CHEBI:57376"/>
        <dbReference type="ChEBI" id="CHEBI:57388"/>
        <dbReference type="EC" id="2.8.3.16"/>
    </reaction>
</comment>
<comment type="pathway">
    <text evidence="2">Metabolic intermediate degradation; oxalate degradation; CO(2) and formate from oxalate: step 1/2.</text>
</comment>
<comment type="subunit">
    <text evidence="2">Homodimer.</text>
</comment>
<comment type="similarity">
    <text evidence="2">Belongs to the CoA-transferase III family. Frc subfamily.</text>
</comment>
<accession>Q31Y97</accession>
<dbReference type="EC" id="2.8.3.16" evidence="2"/>
<dbReference type="EMBL" id="CP000036">
    <property type="protein sequence ID" value="ABB66961.1"/>
    <property type="molecule type" value="Genomic_DNA"/>
</dbReference>
<dbReference type="RefSeq" id="WP_000106759.1">
    <property type="nucleotide sequence ID" value="NC_007613.1"/>
</dbReference>
<dbReference type="SMR" id="Q31Y97"/>
<dbReference type="GeneID" id="75202557"/>
<dbReference type="KEGG" id="sbo:SBO_2400"/>
<dbReference type="HOGENOM" id="CLU_033975_2_1_6"/>
<dbReference type="UniPathway" id="UPA00540">
    <property type="reaction ID" value="UER00598"/>
</dbReference>
<dbReference type="Proteomes" id="UP000007067">
    <property type="component" value="Chromosome"/>
</dbReference>
<dbReference type="GO" id="GO:0033608">
    <property type="term" value="F:formyl-CoA transferase activity"/>
    <property type="evidence" value="ECO:0007669"/>
    <property type="project" value="UniProtKB-EC"/>
</dbReference>
<dbReference type="GO" id="GO:0033611">
    <property type="term" value="P:oxalate catabolic process"/>
    <property type="evidence" value="ECO:0007669"/>
    <property type="project" value="UniProtKB-UniRule"/>
</dbReference>
<dbReference type="Gene3D" id="3.40.50.10540">
    <property type="entry name" value="Crotonobetainyl-coa:carnitine coa-transferase, domain 1"/>
    <property type="match status" value="1"/>
</dbReference>
<dbReference type="Gene3D" id="3.30.1540.10">
    <property type="entry name" value="formyl-coa transferase, domain 3"/>
    <property type="match status" value="1"/>
</dbReference>
<dbReference type="HAMAP" id="MF_00742">
    <property type="entry name" value="Formyl_CoA_transfer"/>
    <property type="match status" value="1"/>
</dbReference>
<dbReference type="InterPro" id="IPR050483">
    <property type="entry name" value="CoA-transferase_III_domain"/>
</dbReference>
<dbReference type="InterPro" id="IPR003673">
    <property type="entry name" value="CoA-Trfase_fam_III"/>
</dbReference>
<dbReference type="InterPro" id="IPR044855">
    <property type="entry name" value="CoA-Trfase_III_dom3_sf"/>
</dbReference>
<dbReference type="InterPro" id="IPR023606">
    <property type="entry name" value="CoA-Trfase_III_dom_1_sf"/>
</dbReference>
<dbReference type="InterPro" id="IPR017659">
    <property type="entry name" value="Formyl_CoA_transfer"/>
</dbReference>
<dbReference type="NCBIfam" id="TIGR03253">
    <property type="entry name" value="oxalate_frc"/>
    <property type="match status" value="1"/>
</dbReference>
<dbReference type="NCBIfam" id="NF003809">
    <property type="entry name" value="PRK05398.1"/>
    <property type="match status" value="1"/>
</dbReference>
<dbReference type="PANTHER" id="PTHR48207">
    <property type="entry name" value="SUCCINATE--HYDROXYMETHYLGLUTARATE COA-TRANSFERASE"/>
    <property type="match status" value="1"/>
</dbReference>
<dbReference type="PANTHER" id="PTHR48207:SF3">
    <property type="entry name" value="SUCCINATE--HYDROXYMETHYLGLUTARATE COA-TRANSFERASE"/>
    <property type="match status" value="1"/>
</dbReference>
<dbReference type="Pfam" id="PF02515">
    <property type="entry name" value="CoA_transf_3"/>
    <property type="match status" value="1"/>
</dbReference>
<dbReference type="SUPFAM" id="SSF89796">
    <property type="entry name" value="CoA-transferase family III (CaiB/BaiF)"/>
    <property type="match status" value="1"/>
</dbReference>
<evidence type="ECO:0000250" key="1"/>
<evidence type="ECO:0000255" key="2">
    <source>
        <dbReference type="HAMAP-Rule" id="MF_00742"/>
    </source>
</evidence>
<keyword id="KW-0808">Transferase</keyword>
<proteinExistence type="inferred from homology"/>
<reference key="1">
    <citation type="journal article" date="2005" name="Nucleic Acids Res.">
        <title>Genome dynamics and diversity of Shigella species, the etiologic agents of bacillary dysentery.</title>
        <authorList>
            <person name="Yang F."/>
            <person name="Yang J."/>
            <person name="Zhang X."/>
            <person name="Chen L."/>
            <person name="Jiang Y."/>
            <person name="Yan Y."/>
            <person name="Tang X."/>
            <person name="Wang J."/>
            <person name="Xiong Z."/>
            <person name="Dong J."/>
            <person name="Xue Y."/>
            <person name="Zhu Y."/>
            <person name="Xu X."/>
            <person name="Sun L."/>
            <person name="Chen S."/>
            <person name="Nie H."/>
            <person name="Peng J."/>
            <person name="Xu J."/>
            <person name="Wang Y."/>
            <person name="Yuan Z."/>
            <person name="Wen Y."/>
            <person name="Yao Z."/>
            <person name="Shen Y."/>
            <person name="Qiang B."/>
            <person name="Hou Y."/>
            <person name="Yu J."/>
            <person name="Jin Q."/>
        </authorList>
    </citation>
    <scope>NUCLEOTIDE SEQUENCE [LARGE SCALE GENOMIC DNA]</scope>
    <source>
        <strain>Sb227</strain>
    </source>
</reference>
<protein>
    <recommendedName>
        <fullName>Formyl-CoA:oxalate CoA-transferase</fullName>
        <shortName>FCOCT</shortName>
        <ecNumber evidence="2">2.8.3.16</ecNumber>
    </recommendedName>
    <alternativeName>
        <fullName evidence="2">Formyl-coenzyme A transferase</fullName>
        <shortName evidence="2">Formyl-CoA transferase</shortName>
    </alternativeName>
</protein>